<proteinExistence type="inferred from homology"/>
<gene>
    <name evidence="2" type="primary">ndhD</name>
</gene>
<protein>
    <recommendedName>
        <fullName evidence="2">NAD(P)H-quinone oxidoreductase chain 4, chloroplastic</fullName>
        <ecNumber evidence="2">7.1.1.-</ecNumber>
    </recommendedName>
    <alternativeName>
        <fullName evidence="2">NAD(P)H dehydrogenase, chain 4</fullName>
    </alternativeName>
    <alternativeName>
        <fullName evidence="2">NADH-plastoquinone oxidoreductase chain 4</fullName>
    </alternativeName>
</protein>
<sequence>MNYFPWLTIIVVFPISAGSLMLFLPYRGNKVHKWYTICICILELLLTTYTFCYNFKMNDPLIQLSEDYKWINFLDFYWRLGIDGLSIGTILLTGFITTLAILAAFPVTRDSRLFHFLMLAMYSGQIGSFSSQDLLLFFIMWELELIPVYLLLSMWGGKKRLYSATKFILYTAGSSIFLLIGVLGISLYGSNEPTLNLELLANQSYPVTLEIILYIGFLIAFAVKSPLIPLHTWLPDTHGEAHYSTCMLLAGILLKMGAYGLVRINMELLPHAHSMFSPWLMVVGTIQIIYAASTSPGQRNLKKRIAYSSVSHMGFIIIGIASITDPGLNGAILQIISHGFIGAALFFLAGTSYDRIRLVSLDEMGGMAISIPKIFTMFTILSMASLALPGMSGFVAEFIVFFGIITSQKYLLMAKILIIFVMAIGMILTPIYLLSMSRQMFYGYKLINVQNFSFFDSGPREFFLSISSLLPIIGMGIYPDFVLALASNKVESILSNYFYG</sequence>
<accession>A4QJQ0</accession>
<geneLocation type="chloroplast"/>
<reference key="1">
    <citation type="submission" date="2007-03" db="EMBL/GenBank/DDBJ databases">
        <title>Sequencing analysis of Aethionema grandiflorum chloroplast DNA.</title>
        <authorList>
            <person name="Hosouchi T."/>
            <person name="Tsuruoka H."/>
            <person name="Kotani H."/>
        </authorList>
    </citation>
    <scope>NUCLEOTIDE SEQUENCE [LARGE SCALE GENOMIC DNA]</scope>
</reference>
<feature type="chain" id="PRO_0000343269" description="NAD(P)H-quinone oxidoreductase chain 4, chloroplastic">
    <location>
        <begin position="1"/>
        <end position="500"/>
    </location>
</feature>
<feature type="transmembrane region" description="Helical" evidence="2">
    <location>
        <begin position="4"/>
        <end position="24"/>
    </location>
</feature>
<feature type="transmembrane region" description="Helical" evidence="2">
    <location>
        <begin position="35"/>
        <end position="55"/>
    </location>
</feature>
<feature type="transmembrane region" description="Helical" evidence="2">
    <location>
        <begin position="87"/>
        <end position="107"/>
    </location>
</feature>
<feature type="transmembrane region" description="Helical" evidence="2">
    <location>
        <begin position="113"/>
        <end position="130"/>
    </location>
</feature>
<feature type="transmembrane region" description="Helical" evidence="2">
    <location>
        <begin position="134"/>
        <end position="154"/>
    </location>
</feature>
<feature type="transmembrane region" description="Helical" evidence="2">
    <location>
        <begin position="167"/>
        <end position="187"/>
    </location>
</feature>
<feature type="transmembrane region" description="Helical" evidence="2">
    <location>
        <begin position="211"/>
        <end position="231"/>
    </location>
</feature>
<feature type="transmembrane region" description="Helical" evidence="2">
    <location>
        <begin position="242"/>
        <end position="262"/>
    </location>
</feature>
<feature type="transmembrane region" description="Helical" evidence="2">
    <location>
        <begin position="272"/>
        <end position="292"/>
    </location>
</feature>
<feature type="transmembrane region" description="Helical" evidence="2">
    <location>
        <begin position="305"/>
        <end position="325"/>
    </location>
</feature>
<feature type="transmembrane region" description="Helical" evidence="2">
    <location>
        <begin position="330"/>
        <end position="350"/>
    </location>
</feature>
<feature type="transmembrane region" description="Helical" evidence="2">
    <location>
        <begin position="386"/>
        <end position="406"/>
    </location>
</feature>
<feature type="transmembrane region" description="Helical" evidence="2">
    <location>
        <begin position="416"/>
        <end position="436"/>
    </location>
</feature>
<feature type="transmembrane region" description="Helical" evidence="2">
    <location>
        <begin position="466"/>
        <end position="486"/>
    </location>
</feature>
<keyword id="KW-0150">Chloroplast</keyword>
<keyword id="KW-0472">Membrane</keyword>
<keyword id="KW-0520">NAD</keyword>
<keyword id="KW-0521">NADP</keyword>
<keyword id="KW-0934">Plastid</keyword>
<keyword id="KW-0618">Plastoquinone</keyword>
<keyword id="KW-0874">Quinone</keyword>
<keyword id="KW-0691">RNA editing</keyword>
<keyword id="KW-0793">Thylakoid</keyword>
<keyword id="KW-1278">Translocase</keyword>
<keyword id="KW-0812">Transmembrane</keyword>
<keyword id="KW-1133">Transmembrane helix</keyword>
<comment type="catalytic activity">
    <reaction evidence="2">
        <text>a plastoquinone + NADH + (n+1) H(+)(in) = a plastoquinol + NAD(+) + n H(+)(out)</text>
        <dbReference type="Rhea" id="RHEA:42608"/>
        <dbReference type="Rhea" id="RHEA-COMP:9561"/>
        <dbReference type="Rhea" id="RHEA-COMP:9562"/>
        <dbReference type="ChEBI" id="CHEBI:15378"/>
        <dbReference type="ChEBI" id="CHEBI:17757"/>
        <dbReference type="ChEBI" id="CHEBI:57540"/>
        <dbReference type="ChEBI" id="CHEBI:57945"/>
        <dbReference type="ChEBI" id="CHEBI:62192"/>
    </reaction>
</comment>
<comment type="catalytic activity">
    <reaction evidence="2">
        <text>a plastoquinone + NADPH + (n+1) H(+)(in) = a plastoquinol + NADP(+) + n H(+)(out)</text>
        <dbReference type="Rhea" id="RHEA:42612"/>
        <dbReference type="Rhea" id="RHEA-COMP:9561"/>
        <dbReference type="Rhea" id="RHEA-COMP:9562"/>
        <dbReference type="ChEBI" id="CHEBI:15378"/>
        <dbReference type="ChEBI" id="CHEBI:17757"/>
        <dbReference type="ChEBI" id="CHEBI:57783"/>
        <dbReference type="ChEBI" id="CHEBI:58349"/>
        <dbReference type="ChEBI" id="CHEBI:62192"/>
    </reaction>
</comment>
<comment type="subcellular location">
    <subcellularLocation>
        <location evidence="2">Plastid</location>
        <location evidence="2">Chloroplast thylakoid membrane</location>
        <topology evidence="2">Multi-pass membrane protein</topology>
    </subcellularLocation>
</comment>
<comment type="RNA editing">
    <location>
        <position position="1" evidence="1"/>
    </location>
    <text evidence="1">The initiator methionine is created by RNA editing.</text>
</comment>
<comment type="similarity">
    <text evidence="2">Belongs to the complex I subunit 4 family.</text>
</comment>
<name>NU4C_AETGR</name>
<organism>
    <name type="scientific">Aethionema grandiflorum</name>
    <name type="common">Persian stone-cress</name>
    <dbReference type="NCBI Taxonomy" id="72657"/>
    <lineage>
        <taxon>Eukaryota</taxon>
        <taxon>Viridiplantae</taxon>
        <taxon>Streptophyta</taxon>
        <taxon>Embryophyta</taxon>
        <taxon>Tracheophyta</taxon>
        <taxon>Spermatophyta</taxon>
        <taxon>Magnoliopsida</taxon>
        <taxon>eudicotyledons</taxon>
        <taxon>Gunneridae</taxon>
        <taxon>Pentapetalae</taxon>
        <taxon>rosids</taxon>
        <taxon>malvids</taxon>
        <taxon>Brassicales</taxon>
        <taxon>Brassicaceae</taxon>
        <taxon>Aethionemeae</taxon>
        <taxon>Aethionema</taxon>
    </lineage>
</organism>
<dbReference type="EC" id="7.1.1.-" evidence="2"/>
<dbReference type="EMBL" id="AP009367">
    <property type="protein sequence ID" value="BAF49905.1"/>
    <property type="status" value="ALT_SEQ"/>
    <property type="molecule type" value="Genomic_DNA"/>
</dbReference>
<dbReference type="RefSeq" id="YP_001123080.2">
    <property type="nucleotide sequence ID" value="NC_009266.1"/>
</dbReference>
<dbReference type="SMR" id="A4QJQ0"/>
<dbReference type="GeneID" id="4962344"/>
<dbReference type="GO" id="GO:0009535">
    <property type="term" value="C:chloroplast thylakoid membrane"/>
    <property type="evidence" value="ECO:0007669"/>
    <property type="project" value="UniProtKB-SubCell"/>
</dbReference>
<dbReference type="GO" id="GO:0008137">
    <property type="term" value="F:NADH dehydrogenase (ubiquinone) activity"/>
    <property type="evidence" value="ECO:0007669"/>
    <property type="project" value="InterPro"/>
</dbReference>
<dbReference type="GO" id="GO:0048039">
    <property type="term" value="F:ubiquinone binding"/>
    <property type="evidence" value="ECO:0007669"/>
    <property type="project" value="TreeGrafter"/>
</dbReference>
<dbReference type="GO" id="GO:0042773">
    <property type="term" value="P:ATP synthesis coupled electron transport"/>
    <property type="evidence" value="ECO:0007669"/>
    <property type="project" value="InterPro"/>
</dbReference>
<dbReference type="GO" id="GO:0015990">
    <property type="term" value="P:electron transport coupled proton transport"/>
    <property type="evidence" value="ECO:0007669"/>
    <property type="project" value="TreeGrafter"/>
</dbReference>
<dbReference type="HAMAP" id="MF_00491">
    <property type="entry name" value="NDH1_NuoM"/>
    <property type="match status" value="1"/>
</dbReference>
<dbReference type="InterPro" id="IPR022997">
    <property type="entry name" value="NADH_Q_OxRdtase_chain4"/>
</dbReference>
<dbReference type="InterPro" id="IPR010227">
    <property type="entry name" value="NADH_Q_OxRdtase_chainM/4"/>
</dbReference>
<dbReference type="InterPro" id="IPR003918">
    <property type="entry name" value="NADH_UbQ_OxRdtase"/>
</dbReference>
<dbReference type="InterPro" id="IPR001750">
    <property type="entry name" value="ND/Mrp_TM"/>
</dbReference>
<dbReference type="NCBIfam" id="TIGR01972">
    <property type="entry name" value="NDH_I_M"/>
    <property type="match status" value="1"/>
</dbReference>
<dbReference type="PANTHER" id="PTHR43507:SF21">
    <property type="entry name" value="NAD(P)H-QUINONE OXIDOREDUCTASE CHAIN 4, CHLOROPLASTIC"/>
    <property type="match status" value="1"/>
</dbReference>
<dbReference type="PANTHER" id="PTHR43507">
    <property type="entry name" value="NADH-UBIQUINONE OXIDOREDUCTASE CHAIN 4"/>
    <property type="match status" value="1"/>
</dbReference>
<dbReference type="Pfam" id="PF00361">
    <property type="entry name" value="Proton_antipo_M"/>
    <property type="match status" value="1"/>
</dbReference>
<dbReference type="PRINTS" id="PR01437">
    <property type="entry name" value="NUOXDRDTASE4"/>
</dbReference>
<evidence type="ECO:0000250" key="1"/>
<evidence type="ECO:0000255" key="2">
    <source>
        <dbReference type="HAMAP-Rule" id="MF_00491"/>
    </source>
</evidence>